<evidence type="ECO:0000255" key="1">
    <source>
        <dbReference type="HAMAP-Rule" id="MF_00184"/>
    </source>
</evidence>
<evidence type="ECO:0000255" key="2">
    <source>
        <dbReference type="PROSITE-ProRule" id="PRU01228"/>
    </source>
</evidence>
<protein>
    <recommendedName>
        <fullName evidence="1">Threonine--tRNA ligase</fullName>
        <ecNumber evidence="1">6.1.1.3</ecNumber>
    </recommendedName>
    <alternativeName>
        <fullName evidence="1">Threonyl-tRNA synthetase</fullName>
        <shortName evidence="1">ThrRS</shortName>
    </alternativeName>
</protein>
<comment type="function">
    <text evidence="1">Catalyzes the attachment of threonine to tRNA(Thr) in a two-step reaction: L-threonine is first activated by ATP to form Thr-AMP and then transferred to the acceptor end of tRNA(Thr). Also edits incorrectly charged L-seryl-tRNA(Thr).</text>
</comment>
<comment type="catalytic activity">
    <reaction evidence="1">
        <text>tRNA(Thr) + L-threonine + ATP = L-threonyl-tRNA(Thr) + AMP + diphosphate + H(+)</text>
        <dbReference type="Rhea" id="RHEA:24624"/>
        <dbReference type="Rhea" id="RHEA-COMP:9670"/>
        <dbReference type="Rhea" id="RHEA-COMP:9704"/>
        <dbReference type="ChEBI" id="CHEBI:15378"/>
        <dbReference type="ChEBI" id="CHEBI:30616"/>
        <dbReference type="ChEBI" id="CHEBI:33019"/>
        <dbReference type="ChEBI" id="CHEBI:57926"/>
        <dbReference type="ChEBI" id="CHEBI:78442"/>
        <dbReference type="ChEBI" id="CHEBI:78534"/>
        <dbReference type="ChEBI" id="CHEBI:456215"/>
        <dbReference type="EC" id="6.1.1.3"/>
    </reaction>
</comment>
<comment type="cofactor">
    <cofactor evidence="1">
        <name>Zn(2+)</name>
        <dbReference type="ChEBI" id="CHEBI:29105"/>
    </cofactor>
    <text evidence="1">Binds 1 zinc ion per subunit.</text>
</comment>
<comment type="subunit">
    <text evidence="1">Homodimer.</text>
</comment>
<comment type="subcellular location">
    <subcellularLocation>
        <location evidence="1">Cytoplasm</location>
    </subcellularLocation>
</comment>
<comment type="similarity">
    <text evidence="1">Belongs to the class-II aminoacyl-tRNA synthetase family.</text>
</comment>
<proteinExistence type="inferred from homology"/>
<feature type="chain" id="PRO_1000020389" description="Threonine--tRNA ligase">
    <location>
        <begin position="1"/>
        <end position="648"/>
    </location>
</feature>
<feature type="domain" description="TGS" evidence="2">
    <location>
        <begin position="1"/>
        <end position="61"/>
    </location>
</feature>
<feature type="region of interest" description="Catalytic" evidence="1">
    <location>
        <begin position="240"/>
        <end position="539"/>
    </location>
</feature>
<feature type="binding site" evidence="1">
    <location>
        <position position="335"/>
    </location>
    <ligand>
        <name>Zn(2+)</name>
        <dbReference type="ChEBI" id="CHEBI:29105"/>
    </ligand>
</feature>
<feature type="binding site" evidence="1">
    <location>
        <position position="386"/>
    </location>
    <ligand>
        <name>Zn(2+)</name>
        <dbReference type="ChEBI" id="CHEBI:29105"/>
    </ligand>
</feature>
<feature type="binding site" evidence="1">
    <location>
        <position position="516"/>
    </location>
    <ligand>
        <name>Zn(2+)</name>
        <dbReference type="ChEBI" id="CHEBI:29105"/>
    </ligand>
</feature>
<dbReference type="EC" id="6.1.1.3" evidence="1"/>
<dbReference type="EMBL" id="AM398681">
    <property type="protein sequence ID" value="CAL42995.1"/>
    <property type="molecule type" value="Genomic_DNA"/>
</dbReference>
<dbReference type="RefSeq" id="WP_011963051.1">
    <property type="nucleotide sequence ID" value="NC_009613.3"/>
</dbReference>
<dbReference type="RefSeq" id="YP_001295811.1">
    <property type="nucleotide sequence ID" value="NC_009613.3"/>
</dbReference>
<dbReference type="SMR" id="A6GY22"/>
<dbReference type="STRING" id="402612.FP0895"/>
<dbReference type="EnsemblBacteria" id="CAL42995">
    <property type="protein sequence ID" value="CAL42995"/>
    <property type="gene ID" value="FP0895"/>
</dbReference>
<dbReference type="GeneID" id="66552483"/>
<dbReference type="KEGG" id="fps:FP0895"/>
<dbReference type="PATRIC" id="fig|402612.5.peg.912"/>
<dbReference type="eggNOG" id="COG0441">
    <property type="taxonomic scope" value="Bacteria"/>
</dbReference>
<dbReference type="HOGENOM" id="CLU_008554_0_1_10"/>
<dbReference type="OrthoDB" id="9802304at2"/>
<dbReference type="Proteomes" id="UP000006394">
    <property type="component" value="Chromosome"/>
</dbReference>
<dbReference type="GO" id="GO:0005737">
    <property type="term" value="C:cytoplasm"/>
    <property type="evidence" value="ECO:0007669"/>
    <property type="project" value="UniProtKB-SubCell"/>
</dbReference>
<dbReference type="GO" id="GO:0005524">
    <property type="term" value="F:ATP binding"/>
    <property type="evidence" value="ECO:0007669"/>
    <property type="project" value="UniProtKB-UniRule"/>
</dbReference>
<dbReference type="GO" id="GO:0046872">
    <property type="term" value="F:metal ion binding"/>
    <property type="evidence" value="ECO:0007669"/>
    <property type="project" value="UniProtKB-KW"/>
</dbReference>
<dbReference type="GO" id="GO:0004829">
    <property type="term" value="F:threonine-tRNA ligase activity"/>
    <property type="evidence" value="ECO:0007669"/>
    <property type="project" value="UniProtKB-UniRule"/>
</dbReference>
<dbReference type="GO" id="GO:0000049">
    <property type="term" value="F:tRNA binding"/>
    <property type="evidence" value="ECO:0007669"/>
    <property type="project" value="UniProtKB-KW"/>
</dbReference>
<dbReference type="GO" id="GO:0006435">
    <property type="term" value="P:threonyl-tRNA aminoacylation"/>
    <property type="evidence" value="ECO:0007669"/>
    <property type="project" value="UniProtKB-UniRule"/>
</dbReference>
<dbReference type="CDD" id="cd01667">
    <property type="entry name" value="TGS_ThrRS"/>
    <property type="match status" value="1"/>
</dbReference>
<dbReference type="CDD" id="cd00860">
    <property type="entry name" value="ThrRS_anticodon"/>
    <property type="match status" value="1"/>
</dbReference>
<dbReference type="CDD" id="cd00771">
    <property type="entry name" value="ThrRS_core"/>
    <property type="match status" value="1"/>
</dbReference>
<dbReference type="FunFam" id="3.10.20.30:FF:000005">
    <property type="entry name" value="Threonine--tRNA ligase"/>
    <property type="match status" value="1"/>
</dbReference>
<dbReference type="FunFam" id="3.30.930.10:FF:000002">
    <property type="entry name" value="Threonine--tRNA ligase"/>
    <property type="match status" value="1"/>
</dbReference>
<dbReference type="FunFam" id="3.40.50.800:FF:000001">
    <property type="entry name" value="Threonine--tRNA ligase"/>
    <property type="match status" value="1"/>
</dbReference>
<dbReference type="FunFam" id="3.30.980.10:FF:000005">
    <property type="entry name" value="Threonyl-tRNA synthetase, mitochondrial"/>
    <property type="match status" value="1"/>
</dbReference>
<dbReference type="Gene3D" id="3.10.20.30">
    <property type="match status" value="1"/>
</dbReference>
<dbReference type="Gene3D" id="3.30.54.20">
    <property type="match status" value="1"/>
</dbReference>
<dbReference type="Gene3D" id="3.40.50.800">
    <property type="entry name" value="Anticodon-binding domain"/>
    <property type="match status" value="1"/>
</dbReference>
<dbReference type="Gene3D" id="3.30.930.10">
    <property type="entry name" value="Bira Bifunctional Protein, Domain 2"/>
    <property type="match status" value="1"/>
</dbReference>
<dbReference type="Gene3D" id="3.30.980.10">
    <property type="entry name" value="Threonyl-trna Synthetase, Chain A, domain 2"/>
    <property type="match status" value="1"/>
</dbReference>
<dbReference type="HAMAP" id="MF_00184">
    <property type="entry name" value="Thr_tRNA_synth"/>
    <property type="match status" value="1"/>
</dbReference>
<dbReference type="InterPro" id="IPR002314">
    <property type="entry name" value="aa-tRNA-synt_IIb"/>
</dbReference>
<dbReference type="InterPro" id="IPR006195">
    <property type="entry name" value="aa-tRNA-synth_II"/>
</dbReference>
<dbReference type="InterPro" id="IPR045864">
    <property type="entry name" value="aa-tRNA-synth_II/BPL/LPL"/>
</dbReference>
<dbReference type="InterPro" id="IPR004154">
    <property type="entry name" value="Anticodon-bd"/>
</dbReference>
<dbReference type="InterPro" id="IPR036621">
    <property type="entry name" value="Anticodon-bd_dom_sf"/>
</dbReference>
<dbReference type="InterPro" id="IPR012675">
    <property type="entry name" value="Beta-grasp_dom_sf"/>
</dbReference>
<dbReference type="InterPro" id="IPR004095">
    <property type="entry name" value="TGS"/>
</dbReference>
<dbReference type="InterPro" id="IPR012676">
    <property type="entry name" value="TGS-like"/>
</dbReference>
<dbReference type="InterPro" id="IPR002320">
    <property type="entry name" value="Thr-tRNA-ligase_IIa"/>
</dbReference>
<dbReference type="InterPro" id="IPR018163">
    <property type="entry name" value="Thr/Ala-tRNA-synth_IIc_edit"/>
</dbReference>
<dbReference type="InterPro" id="IPR047246">
    <property type="entry name" value="ThrRS_anticodon"/>
</dbReference>
<dbReference type="InterPro" id="IPR033728">
    <property type="entry name" value="ThrRS_core"/>
</dbReference>
<dbReference type="InterPro" id="IPR012947">
    <property type="entry name" value="tRNA_SAD"/>
</dbReference>
<dbReference type="NCBIfam" id="TIGR00418">
    <property type="entry name" value="thrS"/>
    <property type="match status" value="1"/>
</dbReference>
<dbReference type="PANTHER" id="PTHR11451:SF44">
    <property type="entry name" value="THREONINE--TRNA LIGASE, CHLOROPLASTIC_MITOCHONDRIAL 2"/>
    <property type="match status" value="1"/>
</dbReference>
<dbReference type="PANTHER" id="PTHR11451">
    <property type="entry name" value="THREONINE-TRNA LIGASE"/>
    <property type="match status" value="1"/>
</dbReference>
<dbReference type="Pfam" id="PF03129">
    <property type="entry name" value="HGTP_anticodon"/>
    <property type="match status" value="1"/>
</dbReference>
<dbReference type="Pfam" id="PF02824">
    <property type="entry name" value="TGS"/>
    <property type="match status" value="1"/>
</dbReference>
<dbReference type="Pfam" id="PF00587">
    <property type="entry name" value="tRNA-synt_2b"/>
    <property type="match status" value="1"/>
</dbReference>
<dbReference type="Pfam" id="PF07973">
    <property type="entry name" value="tRNA_SAD"/>
    <property type="match status" value="1"/>
</dbReference>
<dbReference type="PRINTS" id="PR01047">
    <property type="entry name" value="TRNASYNTHTHR"/>
</dbReference>
<dbReference type="SMART" id="SM00863">
    <property type="entry name" value="tRNA_SAD"/>
    <property type="match status" value="1"/>
</dbReference>
<dbReference type="SUPFAM" id="SSF52954">
    <property type="entry name" value="Class II aaRS ABD-related"/>
    <property type="match status" value="1"/>
</dbReference>
<dbReference type="SUPFAM" id="SSF55681">
    <property type="entry name" value="Class II aaRS and biotin synthetases"/>
    <property type="match status" value="1"/>
</dbReference>
<dbReference type="SUPFAM" id="SSF81271">
    <property type="entry name" value="TGS-like"/>
    <property type="match status" value="1"/>
</dbReference>
<dbReference type="SUPFAM" id="SSF55186">
    <property type="entry name" value="ThrRS/AlaRS common domain"/>
    <property type="match status" value="1"/>
</dbReference>
<dbReference type="PROSITE" id="PS50862">
    <property type="entry name" value="AA_TRNA_LIGASE_II"/>
    <property type="match status" value="1"/>
</dbReference>
<dbReference type="PROSITE" id="PS51880">
    <property type="entry name" value="TGS"/>
    <property type="match status" value="1"/>
</dbReference>
<gene>
    <name evidence="1" type="primary">thrS</name>
    <name type="ordered locus">FP0895</name>
</gene>
<keyword id="KW-0030">Aminoacyl-tRNA synthetase</keyword>
<keyword id="KW-0067">ATP-binding</keyword>
<keyword id="KW-0963">Cytoplasm</keyword>
<keyword id="KW-0436">Ligase</keyword>
<keyword id="KW-0479">Metal-binding</keyword>
<keyword id="KW-0547">Nucleotide-binding</keyword>
<keyword id="KW-0648">Protein biosynthesis</keyword>
<keyword id="KW-1185">Reference proteome</keyword>
<keyword id="KW-0694">RNA-binding</keyword>
<keyword id="KW-0820">tRNA-binding</keyword>
<keyword id="KW-0862">Zinc</keyword>
<name>SYT_FLAPJ</name>
<sequence>MIKITLPDGSIKEFENGVTPMDVAKSISEGLARNVISAAFNNITVEISTELTTDGSLVLYTWNDKDGKKAFWHSTSHVMAQVLEEMYPGLKLTLGPAIDNGFYYDVDFGDTKIVEADFKKIESRILEISKEKHEFKLRPVTKADALELYKDNEYKFELISNLEDGTITFCDHATFTDLCRGGHIPNTGIIKAVKIMSIAGAYWRGDEKNKQLTRVYGTSFPKQKDLTDYLELLEEAKRRDHRKLGKELELFAFSQKVGQGLPLWLPKGAALRDRLEQFLKKAQKKGGYEQVVTPHIGQKELYVTSGHYAKYGADSFQPISTPTEGEEFLLKPMNCPHHCEIYNVRPWSYKDLPKRYAEFGTVYRYEQSGELHGLTRVRGFTQDDAHIFCTPDQLDEEFKKVIDLVLYVFGSLGFENFTAQISLRDKENRDKYIGSDENWEKAENAIINAARDKNLNTVVEYGEAAFYGPKLDFMVKDALGRSWQLGTIQVDYNLPERFELTYKGSDDQLHRPVMIHRAPFGSMERFIAILLEHTAGNFPLWLMPEQAIILCLSDKYEIYAKKVLNLLENHEIRALIDNRNESIGRKIRDAEMQKTPFMLIVGEEEEKNNTISIRRHGQEGKGNITVTIEEFARIVNDEISKTLKTFEV</sequence>
<accession>A6GY22</accession>
<organism>
    <name type="scientific">Flavobacterium psychrophilum (strain ATCC 49511 / DSM 21280 / CIP 103535 / JIP02/86)</name>
    <dbReference type="NCBI Taxonomy" id="402612"/>
    <lineage>
        <taxon>Bacteria</taxon>
        <taxon>Pseudomonadati</taxon>
        <taxon>Bacteroidota</taxon>
        <taxon>Flavobacteriia</taxon>
        <taxon>Flavobacteriales</taxon>
        <taxon>Flavobacteriaceae</taxon>
        <taxon>Flavobacterium</taxon>
    </lineage>
</organism>
<reference key="1">
    <citation type="journal article" date="2007" name="Nat. Biotechnol.">
        <title>Complete genome sequence of the fish pathogen Flavobacterium psychrophilum.</title>
        <authorList>
            <person name="Duchaud E."/>
            <person name="Boussaha M."/>
            <person name="Loux V."/>
            <person name="Bernardet J.-F."/>
            <person name="Michel C."/>
            <person name="Kerouault B."/>
            <person name="Mondot S."/>
            <person name="Nicolas P."/>
            <person name="Bossy R."/>
            <person name="Caron C."/>
            <person name="Bessieres P."/>
            <person name="Gibrat J.-F."/>
            <person name="Claverol S."/>
            <person name="Dumetz F."/>
            <person name="Le Henaff M."/>
            <person name="Benmansour A."/>
        </authorList>
    </citation>
    <scope>NUCLEOTIDE SEQUENCE [LARGE SCALE GENOMIC DNA]</scope>
    <source>
        <strain>ATCC 49511 / DSM 21280 / CIP 103535 / JIP02/86</strain>
    </source>
</reference>